<keyword id="KW-0963">Cytoplasm</keyword>
<keyword id="KW-0378">Hydrolase</keyword>
<keyword id="KW-1185">Reference proteome</keyword>
<protein>
    <recommendedName>
        <fullName evidence="1">Urease subunit beta</fullName>
        <ecNumber evidence="1">3.5.1.5</ecNumber>
    </recommendedName>
    <alternativeName>
        <fullName evidence="1">Urea amidohydrolase subunit beta</fullName>
    </alternativeName>
</protein>
<gene>
    <name evidence="1" type="primary">ureB</name>
    <name type="ordered locus">Veis_1727</name>
</gene>
<reference key="1">
    <citation type="submission" date="2006-12" db="EMBL/GenBank/DDBJ databases">
        <title>Complete sequence of chromosome 1 of Verminephrobacter eiseniae EF01-2.</title>
        <authorList>
            <person name="Copeland A."/>
            <person name="Lucas S."/>
            <person name="Lapidus A."/>
            <person name="Barry K."/>
            <person name="Detter J.C."/>
            <person name="Glavina del Rio T."/>
            <person name="Dalin E."/>
            <person name="Tice H."/>
            <person name="Pitluck S."/>
            <person name="Chertkov O."/>
            <person name="Brettin T."/>
            <person name="Bruce D."/>
            <person name="Han C."/>
            <person name="Tapia R."/>
            <person name="Gilna P."/>
            <person name="Schmutz J."/>
            <person name="Larimer F."/>
            <person name="Land M."/>
            <person name="Hauser L."/>
            <person name="Kyrpides N."/>
            <person name="Kim E."/>
            <person name="Stahl D."/>
            <person name="Richardson P."/>
        </authorList>
    </citation>
    <scope>NUCLEOTIDE SEQUENCE [LARGE SCALE GENOMIC DNA]</scope>
    <source>
        <strain>EF01-2</strain>
    </source>
</reference>
<comment type="catalytic activity">
    <reaction evidence="1">
        <text>urea + 2 H2O + H(+) = hydrogencarbonate + 2 NH4(+)</text>
        <dbReference type="Rhea" id="RHEA:20557"/>
        <dbReference type="ChEBI" id="CHEBI:15377"/>
        <dbReference type="ChEBI" id="CHEBI:15378"/>
        <dbReference type="ChEBI" id="CHEBI:16199"/>
        <dbReference type="ChEBI" id="CHEBI:17544"/>
        <dbReference type="ChEBI" id="CHEBI:28938"/>
        <dbReference type="EC" id="3.5.1.5"/>
    </reaction>
</comment>
<comment type="pathway">
    <text evidence="1">Nitrogen metabolism; urea degradation; CO(2) and NH(3) from urea (urease route): step 1/1.</text>
</comment>
<comment type="subunit">
    <text evidence="1">Heterotrimer of UreA (gamma), UreB (beta) and UreC (alpha) subunits. Three heterotrimers associate to form the active enzyme.</text>
</comment>
<comment type="subcellular location">
    <subcellularLocation>
        <location evidence="1">Cytoplasm</location>
    </subcellularLocation>
</comment>
<comment type="similarity">
    <text evidence="1">Belongs to the urease beta subunit family.</text>
</comment>
<feature type="chain" id="PRO_1000070782" description="Urease subunit beta">
    <location>
        <begin position="1"/>
        <end position="101"/>
    </location>
</feature>
<name>URE2_VEREI</name>
<evidence type="ECO:0000255" key="1">
    <source>
        <dbReference type="HAMAP-Rule" id="MF_01954"/>
    </source>
</evidence>
<proteinExistence type="inferred from homology"/>
<organism>
    <name type="scientific">Verminephrobacter eiseniae (strain EF01-2)</name>
    <dbReference type="NCBI Taxonomy" id="391735"/>
    <lineage>
        <taxon>Bacteria</taxon>
        <taxon>Pseudomonadati</taxon>
        <taxon>Pseudomonadota</taxon>
        <taxon>Betaproteobacteria</taxon>
        <taxon>Burkholderiales</taxon>
        <taxon>Comamonadaceae</taxon>
        <taxon>Verminephrobacter</taxon>
    </lineage>
</organism>
<dbReference type="EC" id="3.5.1.5" evidence="1"/>
<dbReference type="EMBL" id="CP000542">
    <property type="protein sequence ID" value="ABM57481.1"/>
    <property type="molecule type" value="Genomic_DNA"/>
</dbReference>
<dbReference type="RefSeq" id="WP_011809488.1">
    <property type="nucleotide sequence ID" value="NC_008786.1"/>
</dbReference>
<dbReference type="SMR" id="A1WIM4"/>
<dbReference type="STRING" id="391735.Veis_1727"/>
<dbReference type="GeneID" id="76460332"/>
<dbReference type="KEGG" id="vei:Veis_1727"/>
<dbReference type="eggNOG" id="COG0832">
    <property type="taxonomic scope" value="Bacteria"/>
</dbReference>
<dbReference type="HOGENOM" id="CLU_129707_1_1_4"/>
<dbReference type="OrthoDB" id="9797217at2"/>
<dbReference type="UniPathway" id="UPA00258">
    <property type="reaction ID" value="UER00370"/>
</dbReference>
<dbReference type="Proteomes" id="UP000000374">
    <property type="component" value="Chromosome"/>
</dbReference>
<dbReference type="GO" id="GO:0035550">
    <property type="term" value="C:urease complex"/>
    <property type="evidence" value="ECO:0007669"/>
    <property type="project" value="InterPro"/>
</dbReference>
<dbReference type="GO" id="GO:0009039">
    <property type="term" value="F:urease activity"/>
    <property type="evidence" value="ECO:0007669"/>
    <property type="project" value="UniProtKB-UniRule"/>
</dbReference>
<dbReference type="GO" id="GO:0043419">
    <property type="term" value="P:urea catabolic process"/>
    <property type="evidence" value="ECO:0007669"/>
    <property type="project" value="UniProtKB-UniRule"/>
</dbReference>
<dbReference type="CDD" id="cd00407">
    <property type="entry name" value="Urease_beta"/>
    <property type="match status" value="1"/>
</dbReference>
<dbReference type="FunFam" id="2.10.150.10:FF:000001">
    <property type="entry name" value="Urease subunit beta"/>
    <property type="match status" value="1"/>
</dbReference>
<dbReference type="Gene3D" id="2.10.150.10">
    <property type="entry name" value="Urease, beta subunit"/>
    <property type="match status" value="1"/>
</dbReference>
<dbReference type="HAMAP" id="MF_01954">
    <property type="entry name" value="Urease_beta"/>
    <property type="match status" value="1"/>
</dbReference>
<dbReference type="InterPro" id="IPR002019">
    <property type="entry name" value="Urease_beta-like"/>
</dbReference>
<dbReference type="InterPro" id="IPR036461">
    <property type="entry name" value="Urease_betasu_sf"/>
</dbReference>
<dbReference type="InterPro" id="IPR050069">
    <property type="entry name" value="Urease_subunit"/>
</dbReference>
<dbReference type="NCBIfam" id="NF009682">
    <property type="entry name" value="PRK13203.1"/>
    <property type="match status" value="1"/>
</dbReference>
<dbReference type="NCBIfam" id="TIGR00192">
    <property type="entry name" value="urease_beta"/>
    <property type="match status" value="1"/>
</dbReference>
<dbReference type="PANTHER" id="PTHR33569">
    <property type="entry name" value="UREASE"/>
    <property type="match status" value="1"/>
</dbReference>
<dbReference type="PANTHER" id="PTHR33569:SF1">
    <property type="entry name" value="UREASE"/>
    <property type="match status" value="1"/>
</dbReference>
<dbReference type="Pfam" id="PF00699">
    <property type="entry name" value="Urease_beta"/>
    <property type="match status" value="1"/>
</dbReference>
<dbReference type="SUPFAM" id="SSF51278">
    <property type="entry name" value="Urease, beta-subunit"/>
    <property type="match status" value="1"/>
</dbReference>
<accession>A1WIM4</accession>
<sequence>MIPGELLIGPGEHPLNTGRRTKTLLVRNTGDRPIQVGSHYHFAETNQALDFDRAAARGMRLNIASGTAVRFEPGQERTVELLDYAGARLVFGFQGRVQGAP</sequence>